<accession>A7SVT1</accession>
<keyword id="KW-0067">ATP-binding</keyword>
<keyword id="KW-0378">Hydrolase</keyword>
<keyword id="KW-0472">Membrane</keyword>
<keyword id="KW-0547">Nucleotide-binding</keyword>
<keyword id="KW-0548">Nucleotidyltransferase</keyword>
<keyword id="KW-1185">Reference proteome</keyword>
<keyword id="KW-0677">Repeat</keyword>
<keyword id="KW-0802">TPR repeat</keyword>
<keyword id="KW-0808">Transferase</keyword>
<keyword id="KW-0812">Transmembrane</keyword>
<keyword id="KW-1133">Transmembrane helix</keyword>
<proteinExistence type="inferred from homology"/>
<dbReference type="EC" id="2.7.7.108" evidence="2"/>
<dbReference type="EC" id="3.1.4.-" evidence="1 2"/>
<dbReference type="EMBL" id="DS469844">
    <property type="protein sequence ID" value="EDO32183.1"/>
    <property type="molecule type" value="Genomic_DNA"/>
</dbReference>
<dbReference type="RefSeq" id="XP_001624283.1">
    <property type="nucleotide sequence ID" value="XM_001624233.1"/>
</dbReference>
<dbReference type="SMR" id="A7SVT1"/>
<dbReference type="STRING" id="45351.A7SVT1"/>
<dbReference type="EnsemblMetazoa" id="EDO32183">
    <property type="protein sequence ID" value="EDO32183"/>
    <property type="gene ID" value="NEMVEDRAFT_v1g194069"/>
</dbReference>
<dbReference type="KEGG" id="nve:5503191"/>
<dbReference type="eggNOG" id="KOG3824">
    <property type="taxonomic scope" value="Eukaryota"/>
</dbReference>
<dbReference type="HOGENOM" id="CLU_040460_0_1_1"/>
<dbReference type="InParanoid" id="A7SVT1"/>
<dbReference type="OMA" id="QLRCQLW"/>
<dbReference type="OrthoDB" id="439046at2759"/>
<dbReference type="PhylomeDB" id="A7SVT1"/>
<dbReference type="Proteomes" id="UP000001593">
    <property type="component" value="Unassembled WGS sequence"/>
</dbReference>
<dbReference type="GO" id="GO:0016020">
    <property type="term" value="C:membrane"/>
    <property type="evidence" value="ECO:0007669"/>
    <property type="project" value="UniProtKB-SubCell"/>
</dbReference>
<dbReference type="GO" id="GO:0070733">
    <property type="term" value="F:AMPylase activity"/>
    <property type="evidence" value="ECO:0000250"/>
    <property type="project" value="UniProtKB"/>
</dbReference>
<dbReference type="GO" id="GO:0005524">
    <property type="term" value="F:ATP binding"/>
    <property type="evidence" value="ECO:0007669"/>
    <property type="project" value="UniProtKB-KW"/>
</dbReference>
<dbReference type="GO" id="GO:0016787">
    <property type="term" value="F:hydrolase activity"/>
    <property type="evidence" value="ECO:0007669"/>
    <property type="project" value="UniProtKB-KW"/>
</dbReference>
<dbReference type="FunFam" id="1.10.3290.10:FF:000001">
    <property type="entry name" value="adenosine monophosphate-protein transferase FICD"/>
    <property type="match status" value="1"/>
</dbReference>
<dbReference type="Gene3D" id="1.10.3290.10">
    <property type="entry name" value="Fido-like domain"/>
    <property type="match status" value="1"/>
</dbReference>
<dbReference type="Gene3D" id="1.25.40.10">
    <property type="entry name" value="Tetratricopeptide repeat domain"/>
    <property type="match status" value="1"/>
</dbReference>
<dbReference type="InterPro" id="IPR003812">
    <property type="entry name" value="Fido"/>
</dbReference>
<dbReference type="InterPro" id="IPR036597">
    <property type="entry name" value="Fido-like_dom_sf"/>
</dbReference>
<dbReference type="InterPro" id="IPR040198">
    <property type="entry name" value="Fido_containing"/>
</dbReference>
<dbReference type="InterPro" id="IPR011990">
    <property type="entry name" value="TPR-like_helical_dom_sf"/>
</dbReference>
<dbReference type="InterPro" id="IPR019734">
    <property type="entry name" value="TPR_rpt"/>
</dbReference>
<dbReference type="PANTHER" id="PTHR13504">
    <property type="entry name" value="FIDO DOMAIN-CONTAINING PROTEIN DDB_G0283145"/>
    <property type="match status" value="1"/>
</dbReference>
<dbReference type="PANTHER" id="PTHR13504:SF34">
    <property type="entry name" value="PROTEIN ADENYLYLTRANSFERASE FICD"/>
    <property type="match status" value="1"/>
</dbReference>
<dbReference type="Pfam" id="PF02661">
    <property type="entry name" value="Fic"/>
    <property type="match status" value="1"/>
</dbReference>
<dbReference type="Pfam" id="PF14559">
    <property type="entry name" value="TPR_19"/>
    <property type="match status" value="1"/>
</dbReference>
<dbReference type="SUPFAM" id="SSF140931">
    <property type="entry name" value="Fic-like"/>
    <property type="match status" value="1"/>
</dbReference>
<dbReference type="SUPFAM" id="SSF48452">
    <property type="entry name" value="TPR-like"/>
    <property type="match status" value="1"/>
</dbReference>
<dbReference type="PROSITE" id="PS51459">
    <property type="entry name" value="FIDO"/>
    <property type="match status" value="1"/>
</dbReference>
<dbReference type="PROSITE" id="PS50005">
    <property type="entry name" value="TPR"/>
    <property type="match status" value="2"/>
</dbReference>
<dbReference type="PROSITE" id="PS50293">
    <property type="entry name" value="TPR_REGION"/>
    <property type="match status" value="1"/>
</dbReference>
<protein>
    <recommendedName>
        <fullName>Protein adenylyltransferase Fic</fullName>
        <ecNumber evidence="2">2.7.7.108</ecNumber>
    </recommendedName>
    <alternativeName>
        <fullName evidence="6">De-AMPylase Fic</fullName>
        <ecNumber evidence="1 2">3.1.4.-</ecNumber>
    </alternativeName>
</protein>
<gene>
    <name type="ORF">v1g194069</name>
</gene>
<reference key="1">
    <citation type="journal article" date="2007" name="Science">
        <title>Sea anemone genome reveals ancestral eumetazoan gene repertoire and genomic organization.</title>
        <authorList>
            <person name="Putnam N.H."/>
            <person name="Srivastava M."/>
            <person name="Hellsten U."/>
            <person name="Dirks B."/>
            <person name="Chapman J."/>
            <person name="Salamov A."/>
            <person name="Terry A."/>
            <person name="Shapiro H."/>
            <person name="Lindquist E."/>
            <person name="Kapitonov V.V."/>
            <person name="Jurka J."/>
            <person name="Genikhovich G."/>
            <person name="Grigoriev I.V."/>
            <person name="Lucas S.M."/>
            <person name="Steele R.E."/>
            <person name="Finnerty J.R."/>
            <person name="Technau U."/>
            <person name="Martindale M.Q."/>
            <person name="Rokhsar D.S."/>
        </authorList>
    </citation>
    <scope>NUCLEOTIDE SEQUENCE [LARGE SCALE GENOMIC DNA]</scope>
    <source>
        <strain>CH2 X CH6</strain>
    </source>
</reference>
<name>FICD_NEMVE</name>
<organism>
    <name type="scientific">Nematostella vectensis</name>
    <name type="common">Starlet sea anemone</name>
    <dbReference type="NCBI Taxonomy" id="45351"/>
    <lineage>
        <taxon>Eukaryota</taxon>
        <taxon>Metazoa</taxon>
        <taxon>Cnidaria</taxon>
        <taxon>Anthozoa</taxon>
        <taxon>Hexacorallia</taxon>
        <taxon>Actiniaria</taxon>
        <taxon>Edwardsiidae</taxon>
        <taxon>Nematostella</taxon>
    </lineage>
</organism>
<evidence type="ECO:0000250" key="1">
    <source>
        <dbReference type="UniProtKB" id="A0A061I403"/>
    </source>
</evidence>
<evidence type="ECO:0000250" key="2">
    <source>
        <dbReference type="UniProtKB" id="Q8SWV6"/>
    </source>
</evidence>
<evidence type="ECO:0000250" key="3">
    <source>
        <dbReference type="UniProtKB" id="Q9BVA6"/>
    </source>
</evidence>
<evidence type="ECO:0000255" key="4"/>
<evidence type="ECO:0000255" key="5">
    <source>
        <dbReference type="PROSITE-ProRule" id="PRU00791"/>
    </source>
</evidence>
<evidence type="ECO:0000305" key="6"/>
<sequence length="427" mass="48496">MDSTQIKQGNLRYLIHLLLASLAGLSIAIIVTHAPVFWRLRSSKNTLDPPGFREGLNMLIPEIHFDAEVQDPLYGEALAALKAASAMKHGGKHSKAVKLFQQAVSLAPHHPEILLQYGEFLEQHDVVQAEHLYNRALTANPLDSRALANRQRALPKVKQLDQEMLDKIDEKRDKLFSIPAGSLPMKRAIKEAYFQHIYHSNAIEGNTMTLSMTRAIVETKMAVPGKSILEHNEVLGLDEALKYVNSTLIQKSESITIDDIIEIHRRVLGHAHPLEAGRYRSTQVFVSDHVPPAPEDLEKQMNAFNDWLLSKDPEILHPIEFAALSHYKLVYIHPFTDGNGRTARLLMNAILMRAGFPPVIIRFQDRHDYYEYLNQANHGDIRPFIRFVARCTERTIDAYLASTTIYPLGHERTRELTDAHDEKDPNR</sequence>
<comment type="function">
    <text evidence="1 2">Protein that can both mediate the addition of adenosine 5'-monophosphate (AMP) to specific residues of target proteins (AMPylation), and the removal of the same modification from target proteins (de-AMPylation), depending on the context (By similarity). The side chain of Glu-204 determines which of the two opposing activities (AMPylase or de-AMPylase) will take place (By similarity). Acts as a key regulator of the unfolded protein response (UPR) by mediating AMPylation or de-AMPylation of Hsc70-3/BiP. In unstressed cells, acts as an adenylyltransferase by mediating AMPylation of Hsc70-3/BiP, thereby inactivating it. In response to endoplasmic reticulum stress, acts as a phosphodiesterase by mediating removal of ATP (de-AMPylation) from Hsc70-3/BiP, leading to restore HSPA5/BiP activity (By similarity).</text>
</comment>
<comment type="catalytic activity">
    <reaction evidence="3">
        <text>L-tyrosyl-[protein] + ATP = O-(5'-adenylyl)-L-tyrosyl-[protein] + diphosphate</text>
        <dbReference type="Rhea" id="RHEA:54288"/>
        <dbReference type="Rhea" id="RHEA-COMP:10136"/>
        <dbReference type="Rhea" id="RHEA-COMP:13846"/>
        <dbReference type="ChEBI" id="CHEBI:30616"/>
        <dbReference type="ChEBI" id="CHEBI:33019"/>
        <dbReference type="ChEBI" id="CHEBI:46858"/>
        <dbReference type="ChEBI" id="CHEBI:83624"/>
        <dbReference type="EC" id="2.7.7.108"/>
    </reaction>
</comment>
<comment type="catalytic activity">
    <reaction evidence="2">
        <text>L-threonyl-[protein] + ATP = 3-O-(5'-adenylyl)-L-threonyl-[protein] + diphosphate</text>
        <dbReference type="Rhea" id="RHEA:54292"/>
        <dbReference type="Rhea" id="RHEA-COMP:11060"/>
        <dbReference type="Rhea" id="RHEA-COMP:13847"/>
        <dbReference type="ChEBI" id="CHEBI:30013"/>
        <dbReference type="ChEBI" id="CHEBI:30616"/>
        <dbReference type="ChEBI" id="CHEBI:33019"/>
        <dbReference type="ChEBI" id="CHEBI:138113"/>
        <dbReference type="EC" id="2.7.7.108"/>
    </reaction>
</comment>
<comment type="catalytic activity">
    <reaction evidence="2">
        <text>3-O-(5'-adenylyl)-L-threonyl-[protein] + H2O = L-threonyl-[protein] + AMP + H(+)</text>
        <dbReference type="Rhea" id="RHEA:55932"/>
        <dbReference type="Rhea" id="RHEA-COMP:11060"/>
        <dbReference type="Rhea" id="RHEA-COMP:13847"/>
        <dbReference type="ChEBI" id="CHEBI:15377"/>
        <dbReference type="ChEBI" id="CHEBI:15378"/>
        <dbReference type="ChEBI" id="CHEBI:30013"/>
        <dbReference type="ChEBI" id="CHEBI:138113"/>
        <dbReference type="ChEBI" id="CHEBI:456215"/>
    </reaction>
</comment>
<comment type="activity regulation">
    <text evidence="1 3">The side chain of Glu-204 determines which of the two opposing activities (AMPylase or de-AMPylase) will take place. In response to endoplasmic reticulum stress, mediates de-AMPylase activity (By similarity). Adenylyltransferase activity is inhibited by the inhibitory helix present at the N-terminus: Glu-204 binds ATP and competes with ATP-binding at Arg-344, thereby preventing adenylyltransferase activity (By similarity). In unstressed cells, disengagement of Glu-204 promotes adenylyltransferase activity (By similarity). Activation dissociates ATP-binding from Glu-204, allowing ordered binding of the entire ATP moiety with the alpha-phosphate in an orientation that is productive for accepting an incoming target hydroxyl side chain (By similarity).</text>
</comment>
<comment type="subunit">
    <text evidence="2">Homodimer.</text>
</comment>
<comment type="subcellular location">
    <subcellularLocation>
        <location evidence="2">Membrane</location>
        <topology evidence="2">Single-pass membrane protein</topology>
    </subcellularLocation>
</comment>
<comment type="domain">
    <text evidence="3">The fido domain mediates the adenylyltransferase activity.</text>
</comment>
<comment type="similarity">
    <text evidence="6">Belongs to the fic family.</text>
</comment>
<feature type="chain" id="PRO_0000381777" description="Protein adenylyltransferase Fic">
    <location>
        <begin position="1"/>
        <end position="427"/>
    </location>
</feature>
<feature type="transmembrane region" description="Helical" evidence="4">
    <location>
        <begin position="17"/>
        <end position="37"/>
    </location>
</feature>
<feature type="repeat" description="TPR 1">
    <location>
        <begin position="77"/>
        <end position="110"/>
    </location>
</feature>
<feature type="repeat" description="TPR 2">
    <location>
        <begin position="111"/>
        <end position="143"/>
    </location>
</feature>
<feature type="domain" description="Fido" evidence="5">
    <location>
        <begin position="255"/>
        <end position="390"/>
    </location>
</feature>
<feature type="short sequence motif" description="Inhibitory (S/T)XXXE(G/N) motif">
    <location>
        <begin position="200"/>
        <end position="205"/>
    </location>
</feature>
<feature type="active site" evidence="1">
    <location>
        <position position="333"/>
    </location>
</feature>
<feature type="binding site" evidence="3">
    <location>
        <position position="204"/>
    </location>
    <ligand>
        <name>ATP</name>
        <dbReference type="ChEBI" id="CHEBI:30616"/>
    </ligand>
</feature>
<feature type="binding site" evidence="3">
    <location>
        <begin position="286"/>
        <end position="289"/>
    </location>
    <ligand>
        <name>ATP</name>
        <dbReference type="ChEBI" id="CHEBI:30616"/>
    </ligand>
</feature>
<feature type="binding site" evidence="3">
    <location>
        <begin position="337"/>
        <end position="344"/>
    </location>
    <ligand>
        <name>ATP</name>
        <dbReference type="ChEBI" id="CHEBI:30616"/>
    </ligand>
</feature>
<feature type="binding site" evidence="3">
    <location>
        <begin position="369"/>
        <end position="370"/>
    </location>
    <ligand>
        <name>ATP</name>
        <dbReference type="ChEBI" id="CHEBI:30616"/>
    </ligand>
</feature>
<feature type="binding site" evidence="3">
    <location>
        <position position="377"/>
    </location>
    <ligand>
        <name>ATP</name>
        <dbReference type="ChEBI" id="CHEBI:30616"/>
    </ligand>
</feature>
<feature type="site" description="Important for autoinhibition of adenylyltransferase activity" evidence="3">
    <location>
        <position position="204"/>
    </location>
</feature>